<organism>
    <name type="scientific">Cellvibrio japonicus (strain Ueda107)</name>
    <name type="common">Pseudomonas fluorescens subsp. cellulosa</name>
    <dbReference type="NCBI Taxonomy" id="498211"/>
    <lineage>
        <taxon>Bacteria</taxon>
        <taxon>Pseudomonadati</taxon>
        <taxon>Pseudomonadota</taxon>
        <taxon>Gammaproteobacteria</taxon>
        <taxon>Cellvibrionales</taxon>
        <taxon>Cellvibrionaceae</taxon>
        <taxon>Cellvibrio</taxon>
    </lineage>
</organism>
<feature type="chain" id="PRO_1000126415" description="Small ribosomal subunit protein bS20">
    <location>
        <begin position="1"/>
        <end position="88"/>
    </location>
</feature>
<feature type="region of interest" description="Disordered" evidence="2">
    <location>
        <begin position="1"/>
        <end position="27"/>
    </location>
</feature>
<feature type="compositionally biased region" description="Basic residues" evidence="2">
    <location>
        <begin position="7"/>
        <end position="22"/>
    </location>
</feature>
<name>RS20_CELJU</name>
<proteinExistence type="inferred from homology"/>
<accession>B3PKU5</accession>
<dbReference type="EMBL" id="CP000934">
    <property type="protein sequence ID" value="ACE83167.1"/>
    <property type="molecule type" value="Genomic_DNA"/>
</dbReference>
<dbReference type="RefSeq" id="WP_012486513.1">
    <property type="nucleotide sequence ID" value="NC_010995.1"/>
</dbReference>
<dbReference type="SMR" id="B3PKU5"/>
<dbReference type="STRING" id="498211.CJA_0852"/>
<dbReference type="KEGG" id="cja:CJA_0852"/>
<dbReference type="eggNOG" id="COG0268">
    <property type="taxonomic scope" value="Bacteria"/>
</dbReference>
<dbReference type="HOGENOM" id="CLU_160655_4_0_6"/>
<dbReference type="OrthoDB" id="9807974at2"/>
<dbReference type="Proteomes" id="UP000001036">
    <property type="component" value="Chromosome"/>
</dbReference>
<dbReference type="GO" id="GO:0005829">
    <property type="term" value="C:cytosol"/>
    <property type="evidence" value="ECO:0007669"/>
    <property type="project" value="TreeGrafter"/>
</dbReference>
<dbReference type="GO" id="GO:0015935">
    <property type="term" value="C:small ribosomal subunit"/>
    <property type="evidence" value="ECO:0007669"/>
    <property type="project" value="TreeGrafter"/>
</dbReference>
<dbReference type="GO" id="GO:0070181">
    <property type="term" value="F:small ribosomal subunit rRNA binding"/>
    <property type="evidence" value="ECO:0007669"/>
    <property type="project" value="TreeGrafter"/>
</dbReference>
<dbReference type="GO" id="GO:0003735">
    <property type="term" value="F:structural constituent of ribosome"/>
    <property type="evidence" value="ECO:0007669"/>
    <property type="project" value="InterPro"/>
</dbReference>
<dbReference type="GO" id="GO:0006412">
    <property type="term" value="P:translation"/>
    <property type="evidence" value="ECO:0007669"/>
    <property type="project" value="UniProtKB-UniRule"/>
</dbReference>
<dbReference type="FunFam" id="1.20.58.110:FF:000001">
    <property type="entry name" value="30S ribosomal protein S20"/>
    <property type="match status" value="1"/>
</dbReference>
<dbReference type="Gene3D" id="1.20.58.110">
    <property type="entry name" value="Ribosomal protein S20"/>
    <property type="match status" value="1"/>
</dbReference>
<dbReference type="HAMAP" id="MF_00500">
    <property type="entry name" value="Ribosomal_bS20"/>
    <property type="match status" value="1"/>
</dbReference>
<dbReference type="InterPro" id="IPR002583">
    <property type="entry name" value="Ribosomal_bS20"/>
</dbReference>
<dbReference type="InterPro" id="IPR036510">
    <property type="entry name" value="Ribosomal_bS20_sf"/>
</dbReference>
<dbReference type="NCBIfam" id="TIGR00029">
    <property type="entry name" value="S20"/>
    <property type="match status" value="1"/>
</dbReference>
<dbReference type="PANTHER" id="PTHR33398">
    <property type="entry name" value="30S RIBOSOMAL PROTEIN S20"/>
    <property type="match status" value="1"/>
</dbReference>
<dbReference type="PANTHER" id="PTHR33398:SF1">
    <property type="entry name" value="SMALL RIBOSOMAL SUBUNIT PROTEIN BS20C"/>
    <property type="match status" value="1"/>
</dbReference>
<dbReference type="Pfam" id="PF01649">
    <property type="entry name" value="Ribosomal_S20p"/>
    <property type="match status" value="1"/>
</dbReference>
<dbReference type="SUPFAM" id="SSF46992">
    <property type="entry name" value="Ribosomal protein S20"/>
    <property type="match status" value="1"/>
</dbReference>
<protein>
    <recommendedName>
        <fullName evidence="1">Small ribosomal subunit protein bS20</fullName>
    </recommendedName>
    <alternativeName>
        <fullName evidence="3">30S ribosomal protein S20</fullName>
    </alternativeName>
</protein>
<comment type="function">
    <text evidence="1">Binds directly to 16S ribosomal RNA.</text>
</comment>
<comment type="similarity">
    <text evidence="1">Belongs to the bacterial ribosomal protein bS20 family.</text>
</comment>
<evidence type="ECO:0000255" key="1">
    <source>
        <dbReference type="HAMAP-Rule" id="MF_00500"/>
    </source>
</evidence>
<evidence type="ECO:0000256" key="2">
    <source>
        <dbReference type="SAM" id="MobiDB-lite"/>
    </source>
</evidence>
<evidence type="ECO:0000305" key="3"/>
<sequence>MANTPQAKKRARQNEKARKHNASMRSMGRTYLKKVLSAIQTGDQAAAQAAYVSAVAVIDRIADKGLIHKNKAARHKSRLNAKLKAMAA</sequence>
<keyword id="KW-1185">Reference proteome</keyword>
<keyword id="KW-0687">Ribonucleoprotein</keyword>
<keyword id="KW-0689">Ribosomal protein</keyword>
<keyword id="KW-0694">RNA-binding</keyword>
<keyword id="KW-0699">rRNA-binding</keyword>
<gene>
    <name evidence="1" type="primary">rpsT</name>
    <name type="ordered locus">CJA_0852</name>
</gene>
<reference key="1">
    <citation type="journal article" date="2008" name="J. Bacteriol.">
        <title>Insights into plant cell wall degradation from the genome sequence of the soil bacterium Cellvibrio japonicus.</title>
        <authorList>
            <person name="DeBoy R.T."/>
            <person name="Mongodin E.F."/>
            <person name="Fouts D.E."/>
            <person name="Tailford L.E."/>
            <person name="Khouri H."/>
            <person name="Emerson J.B."/>
            <person name="Mohamoud Y."/>
            <person name="Watkins K."/>
            <person name="Henrissat B."/>
            <person name="Gilbert H.J."/>
            <person name="Nelson K.E."/>
        </authorList>
    </citation>
    <scope>NUCLEOTIDE SEQUENCE [LARGE SCALE GENOMIC DNA]</scope>
    <source>
        <strain>Ueda107</strain>
    </source>
</reference>